<keyword id="KW-0997">Cell inner membrane</keyword>
<keyword id="KW-1003">Cell membrane</keyword>
<keyword id="KW-0407">Ion channel</keyword>
<keyword id="KW-0406">Ion transport</keyword>
<keyword id="KW-0472">Membrane</keyword>
<keyword id="KW-0479">Metal-binding</keyword>
<keyword id="KW-1185">Reference proteome</keyword>
<keyword id="KW-0915">Sodium</keyword>
<keyword id="KW-0812">Transmembrane</keyword>
<keyword id="KW-1133">Transmembrane helix</keyword>
<keyword id="KW-0813">Transport</keyword>
<sequence>MIQALLVAVGGAIGSLLRYYVGQWTLRLMGPAFPWGTLAVNVVGCFVIGVFAELIARRFNASVELRLLLITGFLGGFTTFSAFSLDAISLFERGEAVAGGIYTVASVGLSMAAVMAGLAVMRALA</sequence>
<organism>
    <name type="scientific">Rhizobium leguminosarum bv. trifolii (strain WSM2304)</name>
    <dbReference type="NCBI Taxonomy" id="395492"/>
    <lineage>
        <taxon>Bacteria</taxon>
        <taxon>Pseudomonadati</taxon>
        <taxon>Pseudomonadota</taxon>
        <taxon>Alphaproteobacteria</taxon>
        <taxon>Hyphomicrobiales</taxon>
        <taxon>Rhizobiaceae</taxon>
        <taxon>Rhizobium/Agrobacterium group</taxon>
        <taxon>Rhizobium</taxon>
    </lineage>
</organism>
<evidence type="ECO:0000255" key="1">
    <source>
        <dbReference type="HAMAP-Rule" id="MF_00454"/>
    </source>
</evidence>
<name>FLUC_RHILW</name>
<dbReference type="EMBL" id="CP001191">
    <property type="protein sequence ID" value="ACI55170.1"/>
    <property type="molecule type" value="Genomic_DNA"/>
</dbReference>
<dbReference type="RefSeq" id="WP_012557774.1">
    <property type="nucleotide sequence ID" value="NC_011369.1"/>
</dbReference>
<dbReference type="SMR" id="B5ZQP2"/>
<dbReference type="STRING" id="395492.Rleg2_1885"/>
<dbReference type="KEGG" id="rlt:Rleg2_1885"/>
<dbReference type="eggNOG" id="COG0239">
    <property type="taxonomic scope" value="Bacteria"/>
</dbReference>
<dbReference type="HOGENOM" id="CLU_114342_2_3_5"/>
<dbReference type="Proteomes" id="UP000008330">
    <property type="component" value="Chromosome"/>
</dbReference>
<dbReference type="GO" id="GO:0005886">
    <property type="term" value="C:plasma membrane"/>
    <property type="evidence" value="ECO:0007669"/>
    <property type="project" value="UniProtKB-SubCell"/>
</dbReference>
<dbReference type="GO" id="GO:0062054">
    <property type="term" value="F:fluoride channel activity"/>
    <property type="evidence" value="ECO:0007669"/>
    <property type="project" value="UniProtKB-UniRule"/>
</dbReference>
<dbReference type="GO" id="GO:0046872">
    <property type="term" value="F:metal ion binding"/>
    <property type="evidence" value="ECO:0007669"/>
    <property type="project" value="UniProtKB-KW"/>
</dbReference>
<dbReference type="GO" id="GO:0140114">
    <property type="term" value="P:cellular detoxification of fluoride"/>
    <property type="evidence" value="ECO:0007669"/>
    <property type="project" value="UniProtKB-UniRule"/>
</dbReference>
<dbReference type="HAMAP" id="MF_00454">
    <property type="entry name" value="FluC"/>
    <property type="match status" value="1"/>
</dbReference>
<dbReference type="InterPro" id="IPR003691">
    <property type="entry name" value="FluC"/>
</dbReference>
<dbReference type="NCBIfam" id="TIGR00494">
    <property type="entry name" value="crcB"/>
    <property type="match status" value="1"/>
</dbReference>
<dbReference type="NCBIfam" id="NF010791">
    <property type="entry name" value="PRK14195.1"/>
    <property type="match status" value="1"/>
</dbReference>
<dbReference type="PANTHER" id="PTHR28259">
    <property type="entry name" value="FLUORIDE EXPORT PROTEIN 1-RELATED"/>
    <property type="match status" value="1"/>
</dbReference>
<dbReference type="PANTHER" id="PTHR28259:SF1">
    <property type="entry name" value="FLUORIDE EXPORT PROTEIN 1-RELATED"/>
    <property type="match status" value="1"/>
</dbReference>
<dbReference type="Pfam" id="PF02537">
    <property type="entry name" value="CRCB"/>
    <property type="match status" value="1"/>
</dbReference>
<accession>B5ZQP2</accession>
<proteinExistence type="inferred from homology"/>
<feature type="chain" id="PRO_1000125149" description="Fluoride-specific ion channel FluC">
    <location>
        <begin position="1"/>
        <end position="125"/>
    </location>
</feature>
<feature type="transmembrane region" description="Helical" evidence="1">
    <location>
        <begin position="1"/>
        <end position="21"/>
    </location>
</feature>
<feature type="transmembrane region" description="Helical" evidence="1">
    <location>
        <begin position="32"/>
        <end position="52"/>
    </location>
</feature>
<feature type="transmembrane region" description="Helical" evidence="1">
    <location>
        <begin position="68"/>
        <end position="88"/>
    </location>
</feature>
<feature type="transmembrane region" description="Helical" evidence="1">
    <location>
        <begin position="101"/>
        <end position="121"/>
    </location>
</feature>
<feature type="binding site" evidence="1">
    <location>
        <position position="75"/>
    </location>
    <ligand>
        <name>Na(+)</name>
        <dbReference type="ChEBI" id="CHEBI:29101"/>
        <note>structural</note>
    </ligand>
</feature>
<feature type="binding site" evidence="1">
    <location>
        <position position="78"/>
    </location>
    <ligand>
        <name>Na(+)</name>
        <dbReference type="ChEBI" id="CHEBI:29101"/>
        <note>structural</note>
    </ligand>
</feature>
<reference key="1">
    <citation type="journal article" date="2010" name="Stand. Genomic Sci.">
        <title>Complete genome sequence of Rhizobium leguminosarum bv trifolii strain WSM2304, an effective microsymbiont of the South American clover Trifolium polymorphum.</title>
        <authorList>
            <person name="Reeve W."/>
            <person name="O'Hara G."/>
            <person name="Chain P."/>
            <person name="Ardley J."/>
            <person name="Brau L."/>
            <person name="Nandesena K."/>
            <person name="Tiwari R."/>
            <person name="Malfatti S."/>
            <person name="Kiss H."/>
            <person name="Lapidus A."/>
            <person name="Copeland A."/>
            <person name="Nolan M."/>
            <person name="Land M."/>
            <person name="Ivanova N."/>
            <person name="Mavromatis K."/>
            <person name="Markowitz V."/>
            <person name="Kyrpides N."/>
            <person name="Melino V."/>
            <person name="Denton M."/>
            <person name="Yates R."/>
            <person name="Howieson J."/>
        </authorList>
    </citation>
    <scope>NUCLEOTIDE SEQUENCE [LARGE SCALE GENOMIC DNA]</scope>
    <source>
        <strain>WSM2304</strain>
    </source>
</reference>
<protein>
    <recommendedName>
        <fullName evidence="1">Fluoride-specific ion channel FluC</fullName>
    </recommendedName>
</protein>
<gene>
    <name evidence="1" type="primary">fluC</name>
    <name evidence="1" type="synonym">crcB</name>
    <name type="ordered locus">Rleg2_1885</name>
</gene>
<comment type="function">
    <text evidence="1">Fluoride-specific ion channel. Important for reducing fluoride concentration in the cell, thus reducing its toxicity.</text>
</comment>
<comment type="catalytic activity">
    <reaction evidence="1">
        <text>fluoride(in) = fluoride(out)</text>
        <dbReference type="Rhea" id="RHEA:76159"/>
        <dbReference type="ChEBI" id="CHEBI:17051"/>
    </reaction>
    <physiologicalReaction direction="left-to-right" evidence="1">
        <dbReference type="Rhea" id="RHEA:76160"/>
    </physiologicalReaction>
</comment>
<comment type="activity regulation">
    <text evidence="1">Na(+) is not transported, but it plays an essential structural role and its presence is essential for fluoride channel function.</text>
</comment>
<comment type="subcellular location">
    <subcellularLocation>
        <location evidence="1">Cell inner membrane</location>
        <topology evidence="1">Multi-pass membrane protein</topology>
    </subcellularLocation>
</comment>
<comment type="similarity">
    <text evidence="1">Belongs to the fluoride channel Fluc/FEX (TC 1.A.43) family.</text>
</comment>